<gene>
    <name evidence="1" type="primary">lipA</name>
    <name type="ordered locus">Ppro_1029</name>
</gene>
<comment type="function">
    <text evidence="1">Catalyzes the radical-mediated insertion of two sulfur atoms into the C-6 and C-8 positions of the octanoyl moiety bound to the lipoyl domains of lipoate-dependent enzymes, thereby converting the octanoylated domains into lipoylated derivatives.</text>
</comment>
<comment type="catalytic activity">
    <reaction evidence="1">
        <text>[[Fe-S] cluster scaffold protein carrying a second [4Fe-4S](2+) cluster] + N(6)-octanoyl-L-lysyl-[protein] + 2 oxidized [2Fe-2S]-[ferredoxin] + 2 S-adenosyl-L-methionine + 4 H(+) = [[Fe-S] cluster scaffold protein] + N(6)-[(R)-dihydrolipoyl]-L-lysyl-[protein] + 4 Fe(3+) + 2 hydrogen sulfide + 2 5'-deoxyadenosine + 2 L-methionine + 2 reduced [2Fe-2S]-[ferredoxin]</text>
        <dbReference type="Rhea" id="RHEA:16585"/>
        <dbReference type="Rhea" id="RHEA-COMP:9928"/>
        <dbReference type="Rhea" id="RHEA-COMP:10000"/>
        <dbReference type="Rhea" id="RHEA-COMP:10001"/>
        <dbReference type="Rhea" id="RHEA-COMP:10475"/>
        <dbReference type="Rhea" id="RHEA-COMP:14568"/>
        <dbReference type="Rhea" id="RHEA-COMP:14569"/>
        <dbReference type="ChEBI" id="CHEBI:15378"/>
        <dbReference type="ChEBI" id="CHEBI:17319"/>
        <dbReference type="ChEBI" id="CHEBI:29034"/>
        <dbReference type="ChEBI" id="CHEBI:29919"/>
        <dbReference type="ChEBI" id="CHEBI:33722"/>
        <dbReference type="ChEBI" id="CHEBI:33737"/>
        <dbReference type="ChEBI" id="CHEBI:33738"/>
        <dbReference type="ChEBI" id="CHEBI:57844"/>
        <dbReference type="ChEBI" id="CHEBI:59789"/>
        <dbReference type="ChEBI" id="CHEBI:78809"/>
        <dbReference type="ChEBI" id="CHEBI:83100"/>
        <dbReference type="EC" id="2.8.1.8"/>
    </reaction>
</comment>
<comment type="cofactor">
    <cofactor evidence="1">
        <name>[4Fe-4S] cluster</name>
        <dbReference type="ChEBI" id="CHEBI:49883"/>
    </cofactor>
    <text evidence="1">Binds 2 [4Fe-4S] clusters per subunit. One cluster is coordinated with 3 cysteines and an exchangeable S-adenosyl-L-methionine.</text>
</comment>
<comment type="pathway">
    <text evidence="1">Protein modification; protein lipoylation via endogenous pathway; protein N(6)-(lipoyl)lysine from octanoyl-[acyl-carrier-protein]: step 2/2.</text>
</comment>
<comment type="subcellular location">
    <subcellularLocation>
        <location evidence="1">Cytoplasm</location>
    </subcellularLocation>
</comment>
<comment type="similarity">
    <text evidence="1">Belongs to the radical SAM superfamily. Lipoyl synthase family.</text>
</comment>
<dbReference type="EC" id="2.8.1.8" evidence="1"/>
<dbReference type="EMBL" id="CP000482">
    <property type="protein sequence ID" value="ABK98655.1"/>
    <property type="molecule type" value="Genomic_DNA"/>
</dbReference>
<dbReference type="RefSeq" id="WP_011734959.1">
    <property type="nucleotide sequence ID" value="NC_008609.1"/>
</dbReference>
<dbReference type="SMR" id="A1AMT5"/>
<dbReference type="STRING" id="338966.Ppro_1029"/>
<dbReference type="KEGG" id="ppd:Ppro_1029"/>
<dbReference type="eggNOG" id="COG0320">
    <property type="taxonomic scope" value="Bacteria"/>
</dbReference>
<dbReference type="HOGENOM" id="CLU_033144_2_1_7"/>
<dbReference type="OrthoDB" id="9787898at2"/>
<dbReference type="UniPathway" id="UPA00538">
    <property type="reaction ID" value="UER00593"/>
</dbReference>
<dbReference type="Proteomes" id="UP000006732">
    <property type="component" value="Chromosome"/>
</dbReference>
<dbReference type="GO" id="GO:0005737">
    <property type="term" value="C:cytoplasm"/>
    <property type="evidence" value="ECO:0007669"/>
    <property type="project" value="UniProtKB-SubCell"/>
</dbReference>
<dbReference type="GO" id="GO:0051539">
    <property type="term" value="F:4 iron, 4 sulfur cluster binding"/>
    <property type="evidence" value="ECO:0007669"/>
    <property type="project" value="UniProtKB-UniRule"/>
</dbReference>
<dbReference type="GO" id="GO:0016992">
    <property type="term" value="F:lipoate synthase activity"/>
    <property type="evidence" value="ECO:0007669"/>
    <property type="project" value="UniProtKB-UniRule"/>
</dbReference>
<dbReference type="GO" id="GO:0046872">
    <property type="term" value="F:metal ion binding"/>
    <property type="evidence" value="ECO:0007669"/>
    <property type="project" value="UniProtKB-KW"/>
</dbReference>
<dbReference type="FunFam" id="3.20.20.70:FF:000040">
    <property type="entry name" value="Lipoyl synthase"/>
    <property type="match status" value="1"/>
</dbReference>
<dbReference type="Gene3D" id="3.20.20.70">
    <property type="entry name" value="Aldolase class I"/>
    <property type="match status" value="1"/>
</dbReference>
<dbReference type="HAMAP" id="MF_00206">
    <property type="entry name" value="Lipoyl_synth"/>
    <property type="match status" value="1"/>
</dbReference>
<dbReference type="InterPro" id="IPR013785">
    <property type="entry name" value="Aldolase_TIM"/>
</dbReference>
<dbReference type="InterPro" id="IPR006638">
    <property type="entry name" value="Elp3/MiaA/NifB-like_rSAM"/>
</dbReference>
<dbReference type="InterPro" id="IPR003698">
    <property type="entry name" value="Lipoyl_synth"/>
</dbReference>
<dbReference type="InterPro" id="IPR007197">
    <property type="entry name" value="rSAM"/>
</dbReference>
<dbReference type="NCBIfam" id="TIGR00510">
    <property type="entry name" value="lipA"/>
    <property type="match status" value="1"/>
</dbReference>
<dbReference type="NCBIfam" id="NF004019">
    <property type="entry name" value="PRK05481.1"/>
    <property type="match status" value="1"/>
</dbReference>
<dbReference type="NCBIfam" id="NF009544">
    <property type="entry name" value="PRK12928.1"/>
    <property type="match status" value="1"/>
</dbReference>
<dbReference type="PANTHER" id="PTHR10949">
    <property type="entry name" value="LIPOYL SYNTHASE"/>
    <property type="match status" value="1"/>
</dbReference>
<dbReference type="PANTHER" id="PTHR10949:SF0">
    <property type="entry name" value="LIPOYL SYNTHASE, MITOCHONDRIAL"/>
    <property type="match status" value="1"/>
</dbReference>
<dbReference type="Pfam" id="PF04055">
    <property type="entry name" value="Radical_SAM"/>
    <property type="match status" value="1"/>
</dbReference>
<dbReference type="PIRSF" id="PIRSF005963">
    <property type="entry name" value="Lipoyl_synth"/>
    <property type="match status" value="1"/>
</dbReference>
<dbReference type="SFLD" id="SFLDF00271">
    <property type="entry name" value="lipoyl_synthase"/>
    <property type="match status" value="1"/>
</dbReference>
<dbReference type="SFLD" id="SFLDG01058">
    <property type="entry name" value="lipoyl_synthase_like"/>
    <property type="match status" value="1"/>
</dbReference>
<dbReference type="SMART" id="SM00729">
    <property type="entry name" value="Elp3"/>
    <property type="match status" value="1"/>
</dbReference>
<dbReference type="SUPFAM" id="SSF102114">
    <property type="entry name" value="Radical SAM enzymes"/>
    <property type="match status" value="1"/>
</dbReference>
<dbReference type="PROSITE" id="PS51918">
    <property type="entry name" value="RADICAL_SAM"/>
    <property type="match status" value="1"/>
</dbReference>
<proteinExistence type="inferred from homology"/>
<name>LIPA_PELPD</name>
<organism>
    <name type="scientific">Pelobacter propionicus (strain DSM 2379 / NBRC 103807 / OttBd1)</name>
    <dbReference type="NCBI Taxonomy" id="338966"/>
    <lineage>
        <taxon>Bacteria</taxon>
        <taxon>Pseudomonadati</taxon>
        <taxon>Thermodesulfobacteriota</taxon>
        <taxon>Desulfuromonadia</taxon>
        <taxon>Desulfuromonadales</taxon>
        <taxon>Desulfuromonadaceae</taxon>
        <taxon>Pelobacter</taxon>
    </lineage>
</organism>
<accession>A1AMT5</accession>
<keyword id="KW-0004">4Fe-4S</keyword>
<keyword id="KW-0963">Cytoplasm</keyword>
<keyword id="KW-0408">Iron</keyword>
<keyword id="KW-0411">Iron-sulfur</keyword>
<keyword id="KW-0479">Metal-binding</keyword>
<keyword id="KW-1185">Reference proteome</keyword>
<keyword id="KW-0949">S-adenosyl-L-methionine</keyword>
<keyword id="KW-0808">Transferase</keyword>
<evidence type="ECO:0000255" key="1">
    <source>
        <dbReference type="HAMAP-Rule" id="MF_00206"/>
    </source>
</evidence>
<evidence type="ECO:0000255" key="2">
    <source>
        <dbReference type="PROSITE-ProRule" id="PRU01266"/>
    </source>
</evidence>
<feature type="chain" id="PRO_1000012252" description="Lipoyl synthase">
    <location>
        <begin position="1"/>
        <end position="314"/>
    </location>
</feature>
<feature type="domain" description="Radical SAM core" evidence="2">
    <location>
        <begin position="72"/>
        <end position="289"/>
    </location>
</feature>
<feature type="binding site" evidence="1">
    <location>
        <position position="60"/>
    </location>
    <ligand>
        <name>[4Fe-4S] cluster</name>
        <dbReference type="ChEBI" id="CHEBI:49883"/>
        <label>1</label>
    </ligand>
</feature>
<feature type="binding site" evidence="1">
    <location>
        <position position="65"/>
    </location>
    <ligand>
        <name>[4Fe-4S] cluster</name>
        <dbReference type="ChEBI" id="CHEBI:49883"/>
        <label>1</label>
    </ligand>
</feature>
<feature type="binding site" evidence="1">
    <location>
        <position position="71"/>
    </location>
    <ligand>
        <name>[4Fe-4S] cluster</name>
        <dbReference type="ChEBI" id="CHEBI:49883"/>
        <label>1</label>
    </ligand>
</feature>
<feature type="binding site" evidence="1">
    <location>
        <position position="86"/>
    </location>
    <ligand>
        <name>[4Fe-4S] cluster</name>
        <dbReference type="ChEBI" id="CHEBI:49883"/>
        <label>2</label>
        <note>4Fe-4S-S-AdoMet</note>
    </ligand>
</feature>
<feature type="binding site" evidence="1">
    <location>
        <position position="90"/>
    </location>
    <ligand>
        <name>[4Fe-4S] cluster</name>
        <dbReference type="ChEBI" id="CHEBI:49883"/>
        <label>2</label>
        <note>4Fe-4S-S-AdoMet</note>
    </ligand>
</feature>
<feature type="binding site" evidence="1">
    <location>
        <position position="93"/>
    </location>
    <ligand>
        <name>[4Fe-4S] cluster</name>
        <dbReference type="ChEBI" id="CHEBI:49883"/>
        <label>2</label>
        <note>4Fe-4S-S-AdoMet</note>
    </ligand>
</feature>
<feature type="binding site" evidence="1">
    <location>
        <position position="300"/>
    </location>
    <ligand>
        <name>[4Fe-4S] cluster</name>
        <dbReference type="ChEBI" id="CHEBI:49883"/>
        <label>1</label>
    </ligand>
</feature>
<protein>
    <recommendedName>
        <fullName evidence="1">Lipoyl synthase</fullName>
        <ecNumber evidence="1">2.8.1.8</ecNumber>
    </recommendedName>
    <alternativeName>
        <fullName evidence="1">Lip-syn</fullName>
        <shortName evidence="1">LS</shortName>
    </alternativeName>
    <alternativeName>
        <fullName evidence="1">Lipoate synthase</fullName>
    </alternativeName>
    <alternativeName>
        <fullName evidence="1">Lipoic acid synthase</fullName>
    </alternativeName>
    <alternativeName>
        <fullName evidence="1">Sulfur insertion protein LipA</fullName>
    </alternativeName>
</protein>
<reference key="1">
    <citation type="submission" date="2006-10" db="EMBL/GenBank/DDBJ databases">
        <title>Complete sequence of chromosome of Pelobacter propionicus DSM 2379.</title>
        <authorList>
            <consortium name="US DOE Joint Genome Institute"/>
            <person name="Copeland A."/>
            <person name="Lucas S."/>
            <person name="Lapidus A."/>
            <person name="Barry K."/>
            <person name="Detter J.C."/>
            <person name="Glavina del Rio T."/>
            <person name="Hammon N."/>
            <person name="Israni S."/>
            <person name="Dalin E."/>
            <person name="Tice H."/>
            <person name="Pitluck S."/>
            <person name="Saunders E."/>
            <person name="Brettin T."/>
            <person name="Bruce D."/>
            <person name="Han C."/>
            <person name="Tapia R."/>
            <person name="Schmutz J."/>
            <person name="Larimer F."/>
            <person name="Land M."/>
            <person name="Hauser L."/>
            <person name="Kyrpides N."/>
            <person name="Kim E."/>
            <person name="Lovley D."/>
            <person name="Richardson P."/>
        </authorList>
    </citation>
    <scope>NUCLEOTIDE SEQUENCE [LARGE SCALE GENOMIC DNA]</scope>
    <source>
        <strain>DSM 2379 / NBRC 103807 / OttBd1</strain>
    </source>
</reference>
<sequence length="314" mass="35484">MDVQPTTMRGAVKTAHLGTDVSLATKPLPKPEWLRGKSASTPDVERLVRILRDNRLHTVCEEASCPNLGECFRKGTATFMIMGDVCTRHCPFCNVAHGSPHELAADEPVNLARAVELLKLSYVVITSVTRDDLPDGGAGHYGACVRALRDLKRSLKVEILTPDFRGAVAVAFEELRMNLPDVFNHNLETVPRLYPRVRPQADYHGSLDLLLRFREQFDHVPTKSGLMLGLGETEQEVRDVMEELRRHRCDMLTLGQYMRPSPHHLPVERYVTPDEFERYRQFGLSIGFSHVESGPMVRSSYHADMQARELMLVN</sequence>